<name>CYB_PHIMA</name>
<gene>
    <name type="primary">MT-CYB</name>
    <name type="synonym">COB</name>
    <name type="synonym">CYTB</name>
    <name type="synonym">MTCYB</name>
</gene>
<feature type="chain" id="PRO_0000060751" description="Cytochrome b">
    <location>
        <begin position="1"/>
        <end position="379"/>
    </location>
</feature>
<feature type="transmembrane region" description="Helical" evidence="2">
    <location>
        <begin position="33"/>
        <end position="53"/>
    </location>
</feature>
<feature type="transmembrane region" description="Helical" evidence="2">
    <location>
        <begin position="77"/>
        <end position="98"/>
    </location>
</feature>
<feature type="transmembrane region" description="Helical" evidence="2">
    <location>
        <begin position="113"/>
        <end position="133"/>
    </location>
</feature>
<feature type="transmembrane region" description="Helical" evidence="2">
    <location>
        <begin position="178"/>
        <end position="198"/>
    </location>
</feature>
<feature type="transmembrane region" description="Helical" evidence="2">
    <location>
        <begin position="226"/>
        <end position="246"/>
    </location>
</feature>
<feature type="transmembrane region" description="Helical" evidence="2">
    <location>
        <begin position="288"/>
        <end position="308"/>
    </location>
</feature>
<feature type="transmembrane region" description="Helical" evidence="2">
    <location>
        <begin position="320"/>
        <end position="340"/>
    </location>
</feature>
<feature type="transmembrane region" description="Helical" evidence="2">
    <location>
        <begin position="347"/>
        <end position="367"/>
    </location>
</feature>
<feature type="binding site" description="axial binding residue" evidence="2">
    <location>
        <position position="83"/>
    </location>
    <ligand>
        <name>heme b</name>
        <dbReference type="ChEBI" id="CHEBI:60344"/>
        <label>b562</label>
    </ligand>
    <ligandPart>
        <name>Fe</name>
        <dbReference type="ChEBI" id="CHEBI:18248"/>
    </ligandPart>
</feature>
<feature type="binding site" description="axial binding residue" evidence="2">
    <location>
        <position position="97"/>
    </location>
    <ligand>
        <name>heme b</name>
        <dbReference type="ChEBI" id="CHEBI:60344"/>
        <label>b566</label>
    </ligand>
    <ligandPart>
        <name>Fe</name>
        <dbReference type="ChEBI" id="CHEBI:18248"/>
    </ligandPart>
</feature>
<feature type="binding site" description="axial binding residue" evidence="2">
    <location>
        <position position="182"/>
    </location>
    <ligand>
        <name>heme b</name>
        <dbReference type="ChEBI" id="CHEBI:60344"/>
        <label>b562</label>
    </ligand>
    <ligandPart>
        <name>Fe</name>
        <dbReference type="ChEBI" id="CHEBI:18248"/>
    </ligandPart>
</feature>
<feature type="binding site" description="axial binding residue" evidence="2">
    <location>
        <position position="196"/>
    </location>
    <ligand>
        <name>heme b</name>
        <dbReference type="ChEBI" id="CHEBI:60344"/>
        <label>b566</label>
    </ligand>
    <ligandPart>
        <name>Fe</name>
        <dbReference type="ChEBI" id="CHEBI:18248"/>
    </ligandPart>
</feature>
<feature type="binding site" evidence="2">
    <location>
        <position position="201"/>
    </location>
    <ligand>
        <name>a ubiquinone</name>
        <dbReference type="ChEBI" id="CHEBI:16389"/>
    </ligand>
</feature>
<accession>Q9B5R2</accession>
<protein>
    <recommendedName>
        <fullName>Cytochrome b</fullName>
    </recommendedName>
    <alternativeName>
        <fullName>Complex III subunit 3</fullName>
    </alternativeName>
    <alternativeName>
        <fullName>Complex III subunit III</fullName>
    </alternativeName>
    <alternativeName>
        <fullName>Cytochrome b-c1 complex subunit 3</fullName>
    </alternativeName>
    <alternativeName>
        <fullName>Ubiquinol-cytochrome-c reductase complex cytochrome b subunit</fullName>
    </alternativeName>
</protein>
<keyword id="KW-0249">Electron transport</keyword>
<keyword id="KW-0349">Heme</keyword>
<keyword id="KW-0408">Iron</keyword>
<keyword id="KW-0472">Membrane</keyword>
<keyword id="KW-0479">Metal-binding</keyword>
<keyword id="KW-0496">Mitochondrion</keyword>
<keyword id="KW-0999">Mitochondrion inner membrane</keyword>
<keyword id="KW-0679">Respiratory chain</keyword>
<keyword id="KW-0812">Transmembrane</keyword>
<keyword id="KW-1133">Transmembrane helix</keyword>
<keyword id="KW-0813">Transport</keyword>
<keyword id="KW-0830">Ubiquinone</keyword>
<proteinExistence type="inferred from homology"/>
<reference key="1">
    <citation type="journal article" date="2001" name="Mol. Phylogenet. Evol.">
        <title>Retrieval of four adaptive lineages in duiker antelope: evidence from mitochondrial DNA sequences and fluorescence in situ hybridization.</title>
        <authorList>
            <person name="van Vuuren B.J."/>
            <person name="Robinson T.J."/>
        </authorList>
    </citation>
    <scope>NUCLEOTIDE SEQUENCE [GENOMIC DNA]</scope>
</reference>
<organism>
    <name type="scientific">Philantomba maxwellii</name>
    <name type="common">Maxwell's duiker</name>
    <name type="synonym">Cephalophus maxwellii</name>
    <dbReference type="NCBI Taxonomy" id="907741"/>
    <lineage>
        <taxon>Eukaryota</taxon>
        <taxon>Metazoa</taxon>
        <taxon>Chordata</taxon>
        <taxon>Craniata</taxon>
        <taxon>Vertebrata</taxon>
        <taxon>Euteleostomi</taxon>
        <taxon>Mammalia</taxon>
        <taxon>Eutheria</taxon>
        <taxon>Laurasiatheria</taxon>
        <taxon>Artiodactyla</taxon>
        <taxon>Ruminantia</taxon>
        <taxon>Pecora</taxon>
        <taxon>Bovidae</taxon>
        <taxon>Cephalophinae</taxon>
        <taxon>Philantomba</taxon>
    </lineage>
</organism>
<sequence length="379" mass="42669">MTNIRKTHPLMKIVNNAFVDLPAPSNISSWWNFGSLLGICLILQILTGLFLAMHYTADTTTAFSSVTHICRDVNYGWIIRYMHANGASMFFICLFMHVGRGLYYGSYAFMETWNIGVILLFATMATAFMGYVLPWGQMSFWGATVITNLLSAIPYIGTNLVEWIWGGFSVDKATLTRFFAFHFIFPFIIAALAMVHLLFLHETGSNNPTGISSDADKIPFHPYYTIKDILGALLLILALMILVLFSPDLLGDPDNYTPANPLNTPPHIKPEWYFLFAYAILRSIPNKLGGVLALVLSILILILMPLLHTSKQRSMMFRPISQCLFWILVADLLTLTWIGGQPVEHPYIIIGQLASIMYFLLILVLMPVASTIENNLLKW</sequence>
<geneLocation type="mitochondrion"/>
<dbReference type="EMBL" id="AF153894">
    <property type="protein sequence ID" value="AAK26682.1"/>
    <property type="molecule type" value="Genomic_DNA"/>
</dbReference>
<dbReference type="SMR" id="Q9B5R2"/>
<dbReference type="GO" id="GO:0005743">
    <property type="term" value="C:mitochondrial inner membrane"/>
    <property type="evidence" value="ECO:0007669"/>
    <property type="project" value="UniProtKB-SubCell"/>
</dbReference>
<dbReference type="GO" id="GO:0045275">
    <property type="term" value="C:respiratory chain complex III"/>
    <property type="evidence" value="ECO:0007669"/>
    <property type="project" value="InterPro"/>
</dbReference>
<dbReference type="GO" id="GO:0046872">
    <property type="term" value="F:metal ion binding"/>
    <property type="evidence" value="ECO:0007669"/>
    <property type="project" value="UniProtKB-KW"/>
</dbReference>
<dbReference type="GO" id="GO:0008121">
    <property type="term" value="F:ubiquinol-cytochrome-c reductase activity"/>
    <property type="evidence" value="ECO:0007669"/>
    <property type="project" value="InterPro"/>
</dbReference>
<dbReference type="GO" id="GO:0006122">
    <property type="term" value="P:mitochondrial electron transport, ubiquinol to cytochrome c"/>
    <property type="evidence" value="ECO:0007669"/>
    <property type="project" value="TreeGrafter"/>
</dbReference>
<dbReference type="CDD" id="cd00290">
    <property type="entry name" value="cytochrome_b_C"/>
    <property type="match status" value="1"/>
</dbReference>
<dbReference type="CDD" id="cd00284">
    <property type="entry name" value="Cytochrome_b_N"/>
    <property type="match status" value="1"/>
</dbReference>
<dbReference type="FunFam" id="1.20.810.10:FF:000002">
    <property type="entry name" value="Cytochrome b"/>
    <property type="match status" value="1"/>
</dbReference>
<dbReference type="Gene3D" id="1.20.810.10">
    <property type="entry name" value="Cytochrome Bc1 Complex, Chain C"/>
    <property type="match status" value="1"/>
</dbReference>
<dbReference type="InterPro" id="IPR005798">
    <property type="entry name" value="Cyt_b/b6_C"/>
</dbReference>
<dbReference type="InterPro" id="IPR036150">
    <property type="entry name" value="Cyt_b/b6_C_sf"/>
</dbReference>
<dbReference type="InterPro" id="IPR005797">
    <property type="entry name" value="Cyt_b/b6_N"/>
</dbReference>
<dbReference type="InterPro" id="IPR027387">
    <property type="entry name" value="Cytb/b6-like_sf"/>
</dbReference>
<dbReference type="InterPro" id="IPR030689">
    <property type="entry name" value="Cytochrome_b"/>
</dbReference>
<dbReference type="InterPro" id="IPR048260">
    <property type="entry name" value="Cytochrome_b_C_euk/bac"/>
</dbReference>
<dbReference type="InterPro" id="IPR048259">
    <property type="entry name" value="Cytochrome_b_N_euk/bac"/>
</dbReference>
<dbReference type="InterPro" id="IPR016174">
    <property type="entry name" value="Di-haem_cyt_TM"/>
</dbReference>
<dbReference type="PANTHER" id="PTHR19271">
    <property type="entry name" value="CYTOCHROME B"/>
    <property type="match status" value="1"/>
</dbReference>
<dbReference type="PANTHER" id="PTHR19271:SF16">
    <property type="entry name" value="CYTOCHROME B"/>
    <property type="match status" value="1"/>
</dbReference>
<dbReference type="Pfam" id="PF00032">
    <property type="entry name" value="Cytochrom_B_C"/>
    <property type="match status" value="1"/>
</dbReference>
<dbReference type="Pfam" id="PF00033">
    <property type="entry name" value="Cytochrome_B"/>
    <property type="match status" value="1"/>
</dbReference>
<dbReference type="PIRSF" id="PIRSF038885">
    <property type="entry name" value="COB"/>
    <property type="match status" value="1"/>
</dbReference>
<dbReference type="SUPFAM" id="SSF81648">
    <property type="entry name" value="a domain/subunit of cytochrome bc1 complex (Ubiquinol-cytochrome c reductase)"/>
    <property type="match status" value="1"/>
</dbReference>
<dbReference type="SUPFAM" id="SSF81342">
    <property type="entry name" value="Transmembrane di-heme cytochromes"/>
    <property type="match status" value="1"/>
</dbReference>
<dbReference type="PROSITE" id="PS51003">
    <property type="entry name" value="CYTB_CTER"/>
    <property type="match status" value="1"/>
</dbReference>
<dbReference type="PROSITE" id="PS51002">
    <property type="entry name" value="CYTB_NTER"/>
    <property type="match status" value="1"/>
</dbReference>
<comment type="function">
    <text evidence="2">Component of the ubiquinol-cytochrome c reductase complex (complex III or cytochrome b-c1 complex) that is part of the mitochondrial respiratory chain. The b-c1 complex mediates electron transfer from ubiquinol to cytochrome c. Contributes to the generation of a proton gradient across the mitochondrial membrane that is then used for ATP synthesis.</text>
</comment>
<comment type="cofactor">
    <cofactor evidence="2">
        <name>heme b</name>
        <dbReference type="ChEBI" id="CHEBI:60344"/>
    </cofactor>
    <text evidence="2">Binds 2 heme b groups non-covalently.</text>
</comment>
<comment type="subunit">
    <text evidence="2">The cytochrome bc1 complex contains 11 subunits: 3 respiratory subunits (MT-CYB, CYC1 and UQCRFS1), 2 core proteins (UQCRC1 and UQCRC2) and 6 low-molecular weight proteins (UQCRH/QCR6, UQCRB/QCR7, UQCRQ/QCR8, UQCR10/QCR9, UQCR11/QCR10 and a cleavage product of UQCRFS1). This cytochrome bc1 complex then forms a dimer.</text>
</comment>
<comment type="subcellular location">
    <subcellularLocation>
        <location evidence="2">Mitochondrion inner membrane</location>
        <topology evidence="2">Multi-pass membrane protein</topology>
    </subcellularLocation>
</comment>
<comment type="miscellaneous">
    <text evidence="1">Heme 1 (or BL or b562) is low-potential and absorbs at about 562 nm, and heme 2 (or BH or b566) is high-potential and absorbs at about 566 nm.</text>
</comment>
<comment type="similarity">
    <text evidence="3 4">Belongs to the cytochrome b family.</text>
</comment>
<comment type="caution">
    <text evidence="2">The full-length protein contains only eight transmembrane helices, not nine as predicted by bioinformatics tools.</text>
</comment>
<evidence type="ECO:0000250" key="1"/>
<evidence type="ECO:0000250" key="2">
    <source>
        <dbReference type="UniProtKB" id="P00157"/>
    </source>
</evidence>
<evidence type="ECO:0000255" key="3">
    <source>
        <dbReference type="PROSITE-ProRule" id="PRU00967"/>
    </source>
</evidence>
<evidence type="ECO:0000255" key="4">
    <source>
        <dbReference type="PROSITE-ProRule" id="PRU00968"/>
    </source>
</evidence>